<organism>
    <name type="scientific">Gallus gallus</name>
    <name type="common">Chicken</name>
    <dbReference type="NCBI Taxonomy" id="9031"/>
    <lineage>
        <taxon>Eukaryota</taxon>
        <taxon>Metazoa</taxon>
        <taxon>Chordata</taxon>
        <taxon>Craniata</taxon>
        <taxon>Vertebrata</taxon>
        <taxon>Euteleostomi</taxon>
        <taxon>Archelosauria</taxon>
        <taxon>Archosauria</taxon>
        <taxon>Dinosauria</taxon>
        <taxon>Saurischia</taxon>
        <taxon>Theropoda</taxon>
        <taxon>Coelurosauria</taxon>
        <taxon>Aves</taxon>
        <taxon>Neognathae</taxon>
        <taxon>Galloanserae</taxon>
        <taxon>Galliformes</taxon>
        <taxon>Phasianidae</taxon>
        <taxon>Phasianinae</taxon>
        <taxon>Gallus</taxon>
    </lineage>
</organism>
<reference key="1">
    <citation type="journal article" date="2004" name="Nature">
        <title>Sequence and comparative analysis of the chicken genome provide unique perspectives on vertebrate evolution.</title>
        <authorList>
            <person name="Hillier L.W."/>
            <person name="Miller W."/>
            <person name="Birney E."/>
            <person name="Warren W."/>
            <person name="Hardison R.C."/>
            <person name="Ponting C.P."/>
            <person name="Bork P."/>
            <person name="Burt D.W."/>
            <person name="Groenen M.A.M."/>
            <person name="Delany M.E."/>
            <person name="Dodgson J.B."/>
            <person name="Chinwalla A.T."/>
            <person name="Cliften P.F."/>
            <person name="Clifton S.W."/>
            <person name="Delehaunty K.D."/>
            <person name="Fronick C."/>
            <person name="Fulton R.S."/>
            <person name="Graves T.A."/>
            <person name="Kremitzki C."/>
            <person name="Layman D."/>
            <person name="Magrini V."/>
            <person name="McPherson J.D."/>
            <person name="Miner T.L."/>
            <person name="Minx P."/>
            <person name="Nash W.E."/>
            <person name="Nhan M.N."/>
            <person name="Nelson J.O."/>
            <person name="Oddy L.G."/>
            <person name="Pohl C.S."/>
            <person name="Randall-Maher J."/>
            <person name="Smith S.M."/>
            <person name="Wallis J.W."/>
            <person name="Yang S.-P."/>
            <person name="Romanov M.N."/>
            <person name="Rondelli C.M."/>
            <person name="Paton B."/>
            <person name="Smith J."/>
            <person name="Morrice D."/>
            <person name="Daniels L."/>
            <person name="Tempest H.G."/>
            <person name="Robertson L."/>
            <person name="Masabanda J.S."/>
            <person name="Griffin D.K."/>
            <person name="Vignal A."/>
            <person name="Fillon V."/>
            <person name="Jacobbson L."/>
            <person name="Kerje S."/>
            <person name="Andersson L."/>
            <person name="Crooijmans R.P."/>
            <person name="Aerts J."/>
            <person name="van der Poel J.J."/>
            <person name="Ellegren H."/>
            <person name="Caldwell R.B."/>
            <person name="Hubbard S.J."/>
            <person name="Grafham D.V."/>
            <person name="Kierzek A.M."/>
            <person name="McLaren S.R."/>
            <person name="Overton I.M."/>
            <person name="Arakawa H."/>
            <person name="Beattie K.J."/>
            <person name="Bezzubov Y."/>
            <person name="Boardman P.E."/>
            <person name="Bonfield J.K."/>
            <person name="Croning M.D.R."/>
            <person name="Davies R.M."/>
            <person name="Francis M.D."/>
            <person name="Humphray S.J."/>
            <person name="Scott C.E."/>
            <person name="Taylor R.G."/>
            <person name="Tickle C."/>
            <person name="Brown W.R.A."/>
            <person name="Rogers J."/>
            <person name="Buerstedde J.-M."/>
            <person name="Wilson S.A."/>
            <person name="Stubbs L."/>
            <person name="Ovcharenko I."/>
            <person name="Gordon L."/>
            <person name="Lucas S."/>
            <person name="Miller M.M."/>
            <person name="Inoko H."/>
            <person name="Shiina T."/>
            <person name="Kaufman J."/>
            <person name="Salomonsen J."/>
            <person name="Skjoedt K."/>
            <person name="Wong G.K.-S."/>
            <person name="Wang J."/>
            <person name="Liu B."/>
            <person name="Wang J."/>
            <person name="Yu J."/>
            <person name="Yang H."/>
            <person name="Nefedov M."/>
            <person name="Koriabine M."/>
            <person name="Dejong P.J."/>
            <person name="Goodstadt L."/>
            <person name="Webber C."/>
            <person name="Dickens N.J."/>
            <person name="Letunic I."/>
            <person name="Suyama M."/>
            <person name="Torrents D."/>
            <person name="von Mering C."/>
            <person name="Zdobnov E.M."/>
            <person name="Makova K."/>
            <person name="Nekrutenko A."/>
            <person name="Elnitski L."/>
            <person name="Eswara P."/>
            <person name="King D.C."/>
            <person name="Yang S.-P."/>
            <person name="Tyekucheva S."/>
            <person name="Radakrishnan A."/>
            <person name="Harris R.S."/>
            <person name="Chiaromonte F."/>
            <person name="Taylor J."/>
            <person name="He J."/>
            <person name="Rijnkels M."/>
            <person name="Griffiths-Jones S."/>
            <person name="Ureta-Vidal A."/>
            <person name="Hoffman M.M."/>
            <person name="Severin J."/>
            <person name="Searle S.M.J."/>
            <person name="Law A.S."/>
            <person name="Speed D."/>
            <person name="Waddington D."/>
            <person name="Cheng Z."/>
            <person name="Tuzun E."/>
            <person name="Eichler E."/>
            <person name="Bao Z."/>
            <person name="Flicek P."/>
            <person name="Shteynberg D.D."/>
            <person name="Brent M.R."/>
            <person name="Bye J.M."/>
            <person name="Huckle E.J."/>
            <person name="Chatterji S."/>
            <person name="Dewey C."/>
            <person name="Pachter L."/>
            <person name="Kouranov A."/>
            <person name="Mourelatos Z."/>
            <person name="Hatzigeorgiou A.G."/>
            <person name="Paterson A.H."/>
            <person name="Ivarie R."/>
            <person name="Brandstrom M."/>
            <person name="Axelsson E."/>
            <person name="Backstrom N."/>
            <person name="Berlin S."/>
            <person name="Webster M.T."/>
            <person name="Pourquie O."/>
            <person name="Reymond A."/>
            <person name="Ucla C."/>
            <person name="Antonarakis S.E."/>
            <person name="Long M."/>
            <person name="Emerson J.J."/>
            <person name="Betran E."/>
            <person name="Dupanloup I."/>
            <person name="Kaessmann H."/>
            <person name="Hinrichs A.S."/>
            <person name="Bejerano G."/>
            <person name="Furey T.S."/>
            <person name="Harte R.A."/>
            <person name="Raney B."/>
            <person name="Siepel A."/>
            <person name="Kent W.J."/>
            <person name="Haussler D."/>
            <person name="Eyras E."/>
            <person name="Castelo R."/>
            <person name="Abril J.F."/>
            <person name="Castellano S."/>
            <person name="Camara F."/>
            <person name="Parra G."/>
            <person name="Guigo R."/>
            <person name="Bourque G."/>
            <person name="Tesler G."/>
            <person name="Pevzner P.A."/>
            <person name="Smit A."/>
            <person name="Fulton L.A."/>
            <person name="Mardis E.R."/>
            <person name="Wilson R.K."/>
        </authorList>
    </citation>
    <scope>NUCLEOTIDE SEQUENCE [LARGE SCALE GENOMIC DNA]</scope>
    <source>
        <strain>Red jungle fowl</strain>
    </source>
</reference>
<reference key="2">
    <citation type="journal article" date="2009" name="Science">
        <title>Crystal structure of the eukaryotic strong inward-rectifier K+ channel Kir2.2 at 3.1 A resolution.</title>
        <authorList>
            <person name="Tao X."/>
            <person name="Avalos J.L."/>
            <person name="Chen J."/>
            <person name="MacKinnon R."/>
        </authorList>
    </citation>
    <scope>X-RAY CRYSTALLOGRAPHY (3.11 ANGSTROMS) OF 38-369</scope>
    <scope>TRANSPORTER ACTIVITY</scope>
    <scope>DISULFIDE BOND</scope>
    <scope>SUBUNIT</scope>
</reference>
<reference key="3">
    <citation type="journal article" date="2011" name="Nature">
        <title>Structural basis of PIP2 activation of the classical inward rectifier K+ channel Kir2.2.</title>
        <authorList>
            <person name="Hansen S.B."/>
            <person name="Tao X."/>
            <person name="MacKinnon R."/>
        </authorList>
    </citation>
    <scope>X-RAY CRYSTALLOGRAPHY (2.45 ANGSTROMS) OF 38-369 OF WILD-TYPE; MUTANT LEU-223 AND MUTANT ALA-186 IN COMPLEX WITH PTDINS(4,5)P2 AND K(+)</scope>
    <scope>TOPOLOGY</scope>
    <scope>DISULFIDE BOND</scope>
    <scope>SUBCELLULAR LOCATION</scope>
    <scope>SUBUNIT</scope>
    <scope>ACTIVITY REGULATION</scope>
</reference>
<protein>
    <recommendedName>
        <fullName>ATP-sensitive inward rectifier potassium channel 12</fullName>
    </recommendedName>
    <alternativeName>
        <fullName evidence="6 7">Inward rectifier K(+) channel Kir2.2</fullName>
    </alternativeName>
    <alternativeName>
        <fullName>Potassium channel, inwardly rectifying subfamily J member 12</fullName>
    </alternativeName>
</protein>
<proteinExistence type="evidence at protein level"/>
<name>KCJ12_CHICK</name>
<dbReference type="EMBL" id="AADN02023767">
    <property type="status" value="NOT_ANNOTATED_CDS"/>
    <property type="molecule type" value="Genomic_DNA"/>
</dbReference>
<dbReference type="RefSeq" id="NP_001383542.1">
    <property type="nucleotide sequence ID" value="NM_001396613.1"/>
</dbReference>
<dbReference type="RefSeq" id="XP_004945226.1">
    <property type="nucleotide sequence ID" value="XM_004945169.2"/>
</dbReference>
<dbReference type="RefSeq" id="XP_004945227.1">
    <property type="nucleotide sequence ID" value="XM_004945170.2"/>
</dbReference>
<dbReference type="RefSeq" id="XP_015149865.1">
    <property type="nucleotide sequence ID" value="XM_015294379.1"/>
</dbReference>
<dbReference type="RefSeq" id="XP_046756644.1">
    <property type="nucleotide sequence ID" value="XM_046900688.1"/>
</dbReference>
<dbReference type="RefSeq" id="XP_046756645.1">
    <property type="nucleotide sequence ID" value="XM_046900689.1"/>
</dbReference>
<dbReference type="RefSeq" id="XP_046756646.1">
    <property type="nucleotide sequence ID" value="XM_046900690.1"/>
</dbReference>
<dbReference type="RefSeq" id="XP_046783495.1">
    <property type="nucleotide sequence ID" value="XM_046927539.1"/>
</dbReference>
<dbReference type="RefSeq" id="XP_046783496.1">
    <property type="nucleotide sequence ID" value="XM_046927540.1"/>
</dbReference>
<dbReference type="RefSeq" id="XP_046783497.1">
    <property type="nucleotide sequence ID" value="XM_046927541.1"/>
</dbReference>
<dbReference type="RefSeq" id="XP_046783498.1">
    <property type="nucleotide sequence ID" value="XM_046927542.1"/>
</dbReference>
<dbReference type="PDB" id="3JYC">
    <property type="method" value="X-ray"/>
    <property type="resolution" value="3.11 A"/>
    <property type="chains" value="A=38-369"/>
</dbReference>
<dbReference type="PDB" id="3SPC">
    <property type="method" value="X-ray"/>
    <property type="resolution" value="2.45 A"/>
    <property type="chains" value="A=38-369"/>
</dbReference>
<dbReference type="PDB" id="3SPG">
    <property type="method" value="X-ray"/>
    <property type="resolution" value="2.61 A"/>
    <property type="chains" value="A=38-369"/>
</dbReference>
<dbReference type="PDB" id="3SPH">
    <property type="method" value="X-ray"/>
    <property type="resolution" value="3.00 A"/>
    <property type="chains" value="A=38-369"/>
</dbReference>
<dbReference type="PDB" id="3SPI">
    <property type="method" value="X-ray"/>
    <property type="resolution" value="3.31 A"/>
    <property type="chains" value="A=38-369"/>
</dbReference>
<dbReference type="PDB" id="3SPJ">
    <property type="method" value="X-ray"/>
    <property type="resolution" value="3.31 A"/>
    <property type="chains" value="A=38-369"/>
</dbReference>
<dbReference type="PDB" id="5KUK">
    <property type="method" value="X-ray"/>
    <property type="resolution" value="2.00 A"/>
    <property type="chains" value="A=38-369"/>
</dbReference>
<dbReference type="PDB" id="5KUM">
    <property type="method" value="X-ray"/>
    <property type="resolution" value="2.80 A"/>
    <property type="chains" value="A=38-369"/>
</dbReference>
<dbReference type="PDB" id="6M84">
    <property type="method" value="X-ray"/>
    <property type="resolution" value="2.81 A"/>
    <property type="chains" value="A=38-369"/>
</dbReference>
<dbReference type="PDB" id="6M85">
    <property type="method" value="X-ray"/>
    <property type="resolution" value="2.71 A"/>
    <property type="chains" value="A=38-369"/>
</dbReference>
<dbReference type="PDB" id="6M86">
    <property type="method" value="X-ray"/>
    <property type="resolution" value="3.60 A"/>
    <property type="chains" value="A=38-366"/>
</dbReference>
<dbReference type="PDBsum" id="3JYC"/>
<dbReference type="PDBsum" id="3SPC"/>
<dbReference type="PDBsum" id="3SPG"/>
<dbReference type="PDBsum" id="3SPH"/>
<dbReference type="PDBsum" id="3SPI"/>
<dbReference type="PDBsum" id="3SPJ"/>
<dbReference type="PDBsum" id="5KUK"/>
<dbReference type="PDBsum" id="5KUM"/>
<dbReference type="PDBsum" id="6M84"/>
<dbReference type="PDBsum" id="6M85"/>
<dbReference type="PDBsum" id="6M86"/>
<dbReference type="SMR" id="F1NHE9"/>
<dbReference type="DIP" id="DIP-59161N"/>
<dbReference type="FunCoup" id="F1NHE9">
    <property type="interactions" value="1"/>
</dbReference>
<dbReference type="STRING" id="9031.ENSGALP00000007506"/>
<dbReference type="PaxDb" id="9031-ENSGALP00000007506"/>
<dbReference type="Ensembl" id="ENSGALT00010052199.1">
    <property type="protein sequence ID" value="ENSGALP00010031172.1"/>
    <property type="gene ID" value="ENSGALG00010021526.1"/>
</dbReference>
<dbReference type="Ensembl" id="ENSGALT00010052203.1">
    <property type="protein sequence ID" value="ENSGALP00010031175.1"/>
    <property type="gene ID" value="ENSGALG00010021526.1"/>
</dbReference>
<dbReference type="Ensembl" id="ENSGALT00010052204.1">
    <property type="protein sequence ID" value="ENSGALP00010031176.1"/>
    <property type="gene ID" value="ENSGALG00010021526.1"/>
</dbReference>
<dbReference type="Ensembl" id="ENSGALT00010052206.1">
    <property type="protein sequence ID" value="ENSGALP00010031178.1"/>
    <property type="gene ID" value="ENSGALG00010021526.1"/>
</dbReference>
<dbReference type="Ensembl" id="ENSGALT00010052208.1">
    <property type="protein sequence ID" value="ENSGALP00010031180.1"/>
    <property type="gene ID" value="ENSGALG00010021526.1"/>
</dbReference>
<dbReference type="Ensembl" id="ENSGALT00010052212.1">
    <property type="protein sequence ID" value="ENSGALP00010031183.1"/>
    <property type="gene ID" value="ENSGALG00010021526.1"/>
</dbReference>
<dbReference type="Ensembl" id="ENSGALT00010052215.1">
    <property type="protein sequence ID" value="ENSGALP00010031187.1"/>
    <property type="gene ID" value="ENSGALG00010021526.1"/>
</dbReference>
<dbReference type="Ensembl" id="ENSGALT00010052216.1">
    <property type="protein sequence ID" value="ENSGALP00010031188.1"/>
    <property type="gene ID" value="ENSGALG00010021526.1"/>
</dbReference>
<dbReference type="Ensembl" id="ENSGALT00010052219.1">
    <property type="protein sequence ID" value="ENSGALP00010031191.1"/>
    <property type="gene ID" value="ENSGALG00010021526.1"/>
</dbReference>
<dbReference type="GeneID" id="427662"/>
<dbReference type="KEGG" id="gga:427662"/>
<dbReference type="VEuPathDB" id="HostDB:geneid_427662"/>
<dbReference type="eggNOG" id="KOG3827">
    <property type="taxonomic scope" value="Eukaryota"/>
</dbReference>
<dbReference type="GeneTree" id="ENSGT01030000234586"/>
<dbReference type="HOGENOM" id="CLU_022738_3_0_1"/>
<dbReference type="InParanoid" id="F1NHE9"/>
<dbReference type="OMA" id="TMHGMNG"/>
<dbReference type="OrthoDB" id="273257at2759"/>
<dbReference type="PhylomeDB" id="F1NHE9"/>
<dbReference type="TreeFam" id="TF313676"/>
<dbReference type="Reactome" id="R-GGA-1296041">
    <property type="pathway name" value="Activation of G protein gated Potassium channels"/>
</dbReference>
<dbReference type="Reactome" id="R-GGA-1296053">
    <property type="pathway name" value="Classical Kir channels"/>
</dbReference>
<dbReference type="Reactome" id="R-GGA-5576886">
    <property type="pathway name" value="Phase 4 - resting membrane potential"/>
</dbReference>
<dbReference type="Reactome" id="R-GGA-997272">
    <property type="pathway name" value="Inhibition of voltage gated Ca2+ channels via Gbeta/gamma subunits"/>
</dbReference>
<dbReference type="EvolutionaryTrace" id="F1NHE9"/>
<dbReference type="PRO" id="PR:F1NHE9"/>
<dbReference type="Proteomes" id="UP000000539">
    <property type="component" value="Chromosome 14"/>
</dbReference>
<dbReference type="Bgee" id="ENSGALG00000004721">
    <property type="expression patterns" value="Expressed in heart and 4 other cell types or tissues"/>
</dbReference>
<dbReference type="GO" id="GO:0016020">
    <property type="term" value="C:membrane"/>
    <property type="evidence" value="ECO:0000314"/>
    <property type="project" value="UniProtKB"/>
</dbReference>
<dbReference type="GO" id="GO:0034702">
    <property type="term" value="C:monoatomic ion channel complex"/>
    <property type="evidence" value="ECO:0007669"/>
    <property type="project" value="UniProtKB-KW"/>
</dbReference>
<dbReference type="GO" id="GO:0005886">
    <property type="term" value="C:plasma membrane"/>
    <property type="evidence" value="ECO:0000318"/>
    <property type="project" value="GO_Central"/>
</dbReference>
<dbReference type="GO" id="GO:0030315">
    <property type="term" value="C:T-tubule"/>
    <property type="evidence" value="ECO:0007669"/>
    <property type="project" value="UniProtKB-SubCell"/>
</dbReference>
<dbReference type="GO" id="GO:0042802">
    <property type="term" value="F:identical protein binding"/>
    <property type="evidence" value="ECO:0000353"/>
    <property type="project" value="IntAct"/>
</dbReference>
<dbReference type="GO" id="GO:0005242">
    <property type="term" value="F:inward rectifier potassium channel activity"/>
    <property type="evidence" value="ECO:0000314"/>
    <property type="project" value="UniProtKB"/>
</dbReference>
<dbReference type="GO" id="GO:1990573">
    <property type="term" value="P:potassium ion import across plasma membrane"/>
    <property type="evidence" value="ECO:0000318"/>
    <property type="project" value="GO_Central"/>
</dbReference>
<dbReference type="GO" id="GO:0006813">
    <property type="term" value="P:potassium ion transport"/>
    <property type="evidence" value="ECO:0000314"/>
    <property type="project" value="UniProtKB"/>
</dbReference>
<dbReference type="GO" id="GO:0051289">
    <property type="term" value="P:protein homotetramerization"/>
    <property type="evidence" value="ECO:0000314"/>
    <property type="project" value="UniProtKB"/>
</dbReference>
<dbReference type="GO" id="GO:0034765">
    <property type="term" value="P:regulation of monoatomic ion transmembrane transport"/>
    <property type="evidence" value="ECO:0000318"/>
    <property type="project" value="GO_Central"/>
</dbReference>
<dbReference type="FunFam" id="1.10.287.70:FF:000039">
    <property type="entry name" value="ATP-sensitive inward rectifier potassium channel 12"/>
    <property type="match status" value="1"/>
</dbReference>
<dbReference type="FunFam" id="2.60.40.1400:FF:000001">
    <property type="entry name" value="G protein-activated inward rectifier potassium channel 2"/>
    <property type="match status" value="1"/>
</dbReference>
<dbReference type="Gene3D" id="1.10.287.70">
    <property type="match status" value="1"/>
</dbReference>
<dbReference type="Gene3D" id="2.60.40.1400">
    <property type="entry name" value="G protein-activated inward rectifier potassium channel 1"/>
    <property type="match status" value="1"/>
</dbReference>
<dbReference type="InterPro" id="IPR014756">
    <property type="entry name" value="Ig_E-set"/>
</dbReference>
<dbReference type="InterPro" id="IPR041647">
    <property type="entry name" value="IRK_C"/>
</dbReference>
<dbReference type="InterPro" id="IPR016449">
    <property type="entry name" value="K_chnl_inward-rec_Kir"/>
</dbReference>
<dbReference type="InterPro" id="IPR003272">
    <property type="entry name" value="K_chnl_inward-rec_Kir2.2"/>
</dbReference>
<dbReference type="InterPro" id="IPR013518">
    <property type="entry name" value="K_chnl_inward-rec_Kir_cyto"/>
</dbReference>
<dbReference type="InterPro" id="IPR013673">
    <property type="entry name" value="K_chnl_inward-rec_Kir_N"/>
</dbReference>
<dbReference type="InterPro" id="IPR040445">
    <property type="entry name" value="Kir_TM"/>
</dbReference>
<dbReference type="PANTHER" id="PTHR11767:SF14">
    <property type="entry name" value="ATP-SENSITIVE INWARD RECTIFIER POTASSIUM CHANNEL 12-RELATED"/>
    <property type="match status" value="1"/>
</dbReference>
<dbReference type="PANTHER" id="PTHR11767">
    <property type="entry name" value="INWARD RECTIFIER POTASSIUM CHANNEL"/>
    <property type="match status" value="1"/>
</dbReference>
<dbReference type="Pfam" id="PF01007">
    <property type="entry name" value="IRK"/>
    <property type="match status" value="1"/>
</dbReference>
<dbReference type="Pfam" id="PF17655">
    <property type="entry name" value="IRK_C"/>
    <property type="match status" value="1"/>
</dbReference>
<dbReference type="Pfam" id="PF08466">
    <property type="entry name" value="IRK_N"/>
    <property type="match status" value="1"/>
</dbReference>
<dbReference type="PRINTS" id="PR01325">
    <property type="entry name" value="KIR22CHANNEL"/>
</dbReference>
<dbReference type="PRINTS" id="PR01320">
    <property type="entry name" value="KIRCHANNEL"/>
</dbReference>
<dbReference type="SUPFAM" id="SSF81296">
    <property type="entry name" value="E set domains"/>
    <property type="match status" value="1"/>
</dbReference>
<dbReference type="SUPFAM" id="SSF81324">
    <property type="entry name" value="Voltage-gated potassium channels"/>
    <property type="match status" value="1"/>
</dbReference>
<sequence>MTAGRVNPYSIVSSEEDGLRLTTMPGINGFGNGKIHTRRKCRNRFVKKNGQCNVEFTNMDDKPQRYIADMFTTCVDIRWRYMLLLFSLAFLVSWLLFGLIFWLIALIHGDLENPGGDDTFKPCVLQVNGFVAAFLFSIETQTTIGYGFRCVTEECPLAVFMVVVQSIVGCIIDSFMIGAIMAKMARPKKRAQTLLFSHNAVVAMRDGKLCLMWRVGNLRKSHIVEAHVRAQLIKPRITEEGEYIPLDQIDIDVGFDKGLDRIFLVSPITILHEINEDSPLFGISRQDLETDDFEIVVILEGMVEATAMTTQARSSYLASEILWGHRFEPVLFEEKNQYKVDYSHFHKTYEVPSTPRCSAKDLVENKFLLPSTNSFCYENELAFMSRDEDEEDDDSRGLDDLSPDNRHEFDRLQATIALDQRSYRRESEI</sequence>
<gene>
    <name type="primary">KCNJ12</name>
</gene>
<feature type="chain" id="PRO_0000422544" description="ATP-sensitive inward rectifier potassium channel 12">
    <location>
        <begin position="1"/>
        <end position="429"/>
    </location>
</feature>
<feature type="topological domain" description="Cytoplasmic" evidence="10">
    <location>
        <begin position="1"/>
        <end position="76"/>
    </location>
</feature>
<feature type="transmembrane region" description="Helical; Name=M1" evidence="5 12">
    <location>
        <begin position="77"/>
        <end position="103"/>
    </location>
</feature>
<feature type="topological domain" description="Extracellular" evidence="10">
    <location>
        <begin position="104"/>
        <end position="129"/>
    </location>
</feature>
<feature type="intramembrane region" description="Helical; Pore-forming; Name=H5" evidence="5 12">
    <location>
        <begin position="130"/>
        <end position="146"/>
    </location>
</feature>
<feature type="topological domain" description="Extracellular" evidence="10">
    <location>
        <begin position="147"/>
        <end position="155"/>
    </location>
</feature>
<feature type="transmembrane region" description="Helical; Name=M2" evidence="5 12">
    <location>
        <begin position="156"/>
        <end position="183"/>
    </location>
</feature>
<feature type="topological domain" description="Cytoplasmic" evidence="10">
    <location>
        <begin position="184"/>
        <end position="429"/>
    </location>
</feature>
<feature type="region of interest" description="Disordered" evidence="3">
    <location>
        <begin position="386"/>
        <end position="407"/>
    </location>
</feature>
<feature type="short sequence motif" description="Selectivity filter" evidence="9 10">
    <location>
        <begin position="143"/>
        <end position="148"/>
    </location>
</feature>
<feature type="compositionally biased region" description="Basic and acidic residues" evidence="3">
    <location>
        <begin position="395"/>
        <end position="407"/>
    </location>
</feature>
<feature type="binding site" evidence="5 13">
    <location>
        <position position="78"/>
    </location>
    <ligand>
        <name>a 1,2-diacyl-sn-glycero-3-phospho-(1D-myo-inositol-4,5-bisphosphate)</name>
        <dbReference type="ChEBI" id="CHEBI:58456"/>
        <note>agonist</note>
    </ligand>
</feature>
<feature type="binding site" evidence="5 13">
    <location>
        <position position="80"/>
    </location>
    <ligand>
        <name>a 1,2-diacyl-sn-glycero-3-phospho-(1D-myo-inositol-4,5-bisphosphate)</name>
        <dbReference type="ChEBI" id="CHEBI:58456"/>
        <note>agonist</note>
    </ligand>
</feature>
<feature type="binding site" evidence="5 13">
    <location>
        <position position="143"/>
    </location>
    <ligand>
        <name>K(+)</name>
        <dbReference type="ChEBI" id="CHEBI:29103"/>
        <label>1</label>
        <note>ligand likely shared between the subunits of the homotetramer</note>
    </ligand>
</feature>
<feature type="binding site" evidence="5 13">
    <location>
        <position position="143"/>
    </location>
    <ligand>
        <name>K(+)</name>
        <dbReference type="ChEBI" id="CHEBI:29103"/>
        <label>2</label>
        <note>ligand likely shared between the subunits of the homotetramer</note>
    </ligand>
</feature>
<feature type="binding site" evidence="5 13">
    <location>
        <position position="144"/>
    </location>
    <ligand>
        <name>K(+)</name>
        <dbReference type="ChEBI" id="CHEBI:29103"/>
        <label>2</label>
        <note>ligand likely shared between the subunits of the homotetramer</note>
    </ligand>
</feature>
<feature type="binding site" evidence="5 13">
    <location>
        <position position="144"/>
    </location>
    <ligand>
        <name>K(+)</name>
        <dbReference type="ChEBI" id="CHEBI:29103"/>
        <label>3</label>
        <note>ligand likely shared between the subunits of the homotetramer</note>
    </ligand>
</feature>
<feature type="binding site" evidence="5 13">
    <location>
        <position position="145"/>
    </location>
    <ligand>
        <name>K(+)</name>
        <dbReference type="ChEBI" id="CHEBI:29103"/>
        <label>3</label>
        <note>ligand likely shared between the subunits of the homotetramer</note>
    </ligand>
</feature>
<feature type="binding site" evidence="5 13">
    <location>
        <position position="145"/>
    </location>
    <ligand>
        <name>K(+)</name>
        <dbReference type="ChEBI" id="CHEBI:29103"/>
        <label>4</label>
        <note>ligand likely shared between the subunits of the homotetramer</note>
    </ligand>
</feature>
<feature type="binding site" evidence="5 13">
    <location>
        <position position="146"/>
    </location>
    <ligand>
        <name>K(+)</name>
        <dbReference type="ChEBI" id="CHEBI:29103"/>
        <label>4</label>
        <note>ligand likely shared between the subunits of the homotetramer</note>
    </ligand>
</feature>
<feature type="binding site" evidence="5 13">
    <location>
        <position position="183"/>
    </location>
    <ligand>
        <name>a 1,2-diacyl-sn-glycero-3-phospho-(1D-myo-inositol-4,5-bisphosphate)</name>
        <dbReference type="ChEBI" id="CHEBI:58456"/>
        <note>agonist</note>
    </ligand>
</feature>
<feature type="binding site" evidence="5 13">
    <location>
        <position position="188"/>
    </location>
    <ligand>
        <name>a 1,2-diacyl-sn-glycero-3-phospho-(1D-myo-inositol-4,5-bisphosphate)</name>
        <dbReference type="ChEBI" id="CHEBI:58456"/>
        <note>agonist</note>
    </ligand>
</feature>
<feature type="disulfide bond" evidence="11 13">
    <location>
        <begin position="123"/>
        <end position="155"/>
    </location>
</feature>
<feature type="strand" evidence="14">
    <location>
        <begin position="54"/>
        <end position="57"/>
    </location>
</feature>
<feature type="helix" evidence="15">
    <location>
        <begin position="62"/>
        <end position="68"/>
    </location>
</feature>
<feature type="helix" evidence="15">
    <location>
        <begin position="70"/>
        <end position="76"/>
    </location>
</feature>
<feature type="helix" evidence="15">
    <location>
        <begin position="79"/>
        <end position="108"/>
    </location>
</feature>
<feature type="helix" evidence="15">
    <location>
        <begin position="110"/>
        <end position="112"/>
    </location>
</feature>
<feature type="strand" evidence="16">
    <location>
        <begin position="113"/>
        <end position="115"/>
    </location>
</feature>
<feature type="strand" evidence="15">
    <location>
        <begin position="123"/>
        <end position="125"/>
    </location>
</feature>
<feature type="helix" evidence="15">
    <location>
        <begin position="130"/>
        <end position="141"/>
    </location>
</feature>
<feature type="strand" evidence="15">
    <location>
        <begin position="147"/>
        <end position="151"/>
    </location>
</feature>
<feature type="helix" evidence="15">
    <location>
        <begin position="156"/>
        <end position="184"/>
    </location>
</feature>
<feature type="helix" evidence="15">
    <location>
        <begin position="187"/>
        <end position="193"/>
    </location>
</feature>
<feature type="strand" evidence="15">
    <location>
        <begin position="194"/>
        <end position="196"/>
    </location>
</feature>
<feature type="strand" evidence="15">
    <location>
        <begin position="200"/>
        <end position="205"/>
    </location>
</feature>
<feature type="strand" evidence="15">
    <location>
        <begin position="208"/>
        <end position="217"/>
    </location>
</feature>
<feature type="strand" evidence="15">
    <location>
        <begin position="219"/>
        <end position="221"/>
    </location>
</feature>
<feature type="strand" evidence="15">
    <location>
        <begin position="223"/>
        <end position="237"/>
    </location>
</feature>
<feature type="strand" evidence="15">
    <location>
        <begin position="243"/>
        <end position="250"/>
    </location>
</feature>
<feature type="helix" evidence="15">
    <location>
        <begin position="255"/>
        <end position="257"/>
    </location>
</feature>
<feature type="turn" evidence="15">
    <location>
        <begin position="258"/>
        <end position="260"/>
    </location>
</feature>
<feature type="strand" evidence="15">
    <location>
        <begin position="268"/>
        <end position="273"/>
    </location>
</feature>
<feature type="turn" evidence="15">
    <location>
        <begin position="279"/>
        <end position="282"/>
    </location>
</feature>
<feature type="helix" evidence="15">
    <location>
        <begin position="285"/>
        <end position="289"/>
    </location>
</feature>
<feature type="strand" evidence="15">
    <location>
        <begin position="294"/>
        <end position="303"/>
    </location>
</feature>
<feature type="turn" evidence="15">
    <location>
        <begin position="304"/>
        <end position="306"/>
    </location>
</feature>
<feature type="strand" evidence="15">
    <location>
        <begin position="309"/>
        <end position="317"/>
    </location>
</feature>
<feature type="helix" evidence="15">
    <location>
        <begin position="318"/>
        <end position="320"/>
    </location>
</feature>
<feature type="strand" evidence="15">
    <location>
        <begin position="321"/>
        <end position="323"/>
    </location>
</feature>
<feature type="strand" evidence="15">
    <location>
        <begin position="325"/>
        <end position="327"/>
    </location>
</feature>
<feature type="strand" evidence="15">
    <location>
        <begin position="331"/>
        <end position="333"/>
    </location>
</feature>
<feature type="strand" evidence="15">
    <location>
        <begin position="335"/>
        <end position="340"/>
    </location>
</feature>
<feature type="helix" evidence="15">
    <location>
        <begin position="342"/>
        <end position="344"/>
    </location>
</feature>
<feature type="strand" evidence="15">
    <location>
        <begin position="348"/>
        <end position="350"/>
    </location>
</feature>
<feature type="helix" evidence="15">
    <location>
        <begin position="359"/>
        <end position="365"/>
    </location>
</feature>
<comment type="function">
    <text evidence="2">Inward rectifying potassium channel that probably participates in controlling the resting membrane potential in electrically excitable cells. Probably participates in establishing action potential waveform and excitability of neuronal and muscle tissues. Inward rectifier potassium channels are characterized by a greater tendency to allow potassium to flow into the cell rather than out of it. Their voltage dependence is regulated by the concentration of extracellular potassium; as external potassium is raised, the voltage range of the channel opening shifts to more positive voltages. The inward rectification is mainly due to the blockage of outward current by internal magnesium.</text>
</comment>
<comment type="catalytic activity">
    <reaction evidence="4">
        <text>K(+)(in) = K(+)(out)</text>
        <dbReference type="Rhea" id="RHEA:29463"/>
        <dbReference type="ChEBI" id="CHEBI:29103"/>
    </reaction>
</comment>
<comment type="activity regulation">
    <text evidence="5">Activated by phosphatidylinositol 4,5-bisphosphate (PtdIns(4,5)P2) (PubMed:21874019). PtdIns(4,5)P2 binding to the cytoplasmic side of the channel triggers a conformation change leading to channel opening.</text>
</comment>
<comment type="subunit">
    <text evidence="4 5">Homotetramer.</text>
</comment>
<comment type="interaction">
    <interactant intactId="EBI-15942324">
        <id>F1NHE9</id>
    </interactant>
    <interactant intactId="EBI-15942324">
        <id>F1NHE9</id>
        <label>KCNJ12</label>
    </interactant>
    <organismsDiffer>false</organismsDiffer>
    <experiments>2</experiments>
</comment>
<comment type="subcellular location">
    <subcellularLocation>
        <location evidence="5">Membrane</location>
        <topology evidence="5">Multi-pass membrane protein</topology>
    </subcellularLocation>
    <subcellularLocation>
        <location evidence="2">Cell membrane</location>
    </subcellularLocation>
    <subcellularLocation>
        <location evidence="1">Cell membrane</location>
        <location evidence="1">Sarcolemma</location>
        <location evidence="1">T-tubule</location>
    </subcellularLocation>
</comment>
<comment type="similarity">
    <text evidence="8">Belongs to the inward rectifier-type potassium channel family.</text>
</comment>
<keyword id="KW-0002">3D-structure</keyword>
<keyword id="KW-1003">Cell membrane</keyword>
<keyword id="KW-1015">Disulfide bond</keyword>
<keyword id="KW-0407">Ion channel</keyword>
<keyword id="KW-0406">Ion transport</keyword>
<keyword id="KW-0472">Membrane</keyword>
<keyword id="KW-0630">Potassium</keyword>
<keyword id="KW-0633">Potassium transport</keyword>
<keyword id="KW-1185">Reference proteome</keyword>
<keyword id="KW-0812">Transmembrane</keyword>
<keyword id="KW-1133">Transmembrane helix</keyword>
<keyword id="KW-0813">Transport</keyword>
<keyword id="KW-0851">Voltage-gated channel</keyword>
<evidence type="ECO:0000250" key="1">
    <source>
        <dbReference type="UniProtKB" id="P52188"/>
    </source>
</evidence>
<evidence type="ECO:0000250" key="2">
    <source>
        <dbReference type="UniProtKB" id="Q14500"/>
    </source>
</evidence>
<evidence type="ECO:0000256" key="3">
    <source>
        <dbReference type="SAM" id="MobiDB-lite"/>
    </source>
</evidence>
<evidence type="ECO:0000269" key="4">
    <source>
    </source>
</evidence>
<evidence type="ECO:0000269" key="5">
    <source>
    </source>
</evidence>
<evidence type="ECO:0000303" key="6">
    <source>
    </source>
</evidence>
<evidence type="ECO:0000303" key="7">
    <source>
    </source>
</evidence>
<evidence type="ECO:0000305" key="8"/>
<evidence type="ECO:0000305" key="9">
    <source>
    </source>
</evidence>
<evidence type="ECO:0000305" key="10">
    <source>
    </source>
</evidence>
<evidence type="ECO:0007744" key="11">
    <source>
        <dbReference type="PDB" id="3JYC"/>
    </source>
</evidence>
<evidence type="ECO:0007744" key="12">
    <source>
        <dbReference type="PDB" id="3SPC"/>
    </source>
</evidence>
<evidence type="ECO:0007744" key="13">
    <source>
        <dbReference type="PDB" id="3SPI"/>
    </source>
</evidence>
<evidence type="ECO:0007829" key="14">
    <source>
        <dbReference type="PDB" id="3JYC"/>
    </source>
</evidence>
<evidence type="ECO:0007829" key="15">
    <source>
        <dbReference type="PDB" id="5KUK"/>
    </source>
</evidence>
<evidence type="ECO:0007829" key="16">
    <source>
        <dbReference type="PDB" id="6M85"/>
    </source>
</evidence>
<accession>F1NHE9</accession>
<accession>D2YW45</accession>